<protein>
    <recommendedName>
        <fullName evidence="4">Cis-abienol synthase, chloroplastic</fullName>
        <shortName evidence="4">NtABS</shortName>
        <ecNumber evidence="3">4.2.3.140</ecNumber>
    </recommendedName>
</protein>
<keyword id="KW-0150">Chloroplast</keyword>
<keyword id="KW-0456">Lyase</keyword>
<keyword id="KW-0460">Magnesium</keyword>
<keyword id="KW-0479">Metal-binding</keyword>
<keyword id="KW-0934">Plastid</keyword>
<keyword id="KW-1185">Reference proteome</keyword>
<keyword id="KW-0809">Transit peptide</keyword>
<organism>
    <name type="scientific">Nicotiana tabacum</name>
    <name type="common">Common tobacco</name>
    <dbReference type="NCBI Taxonomy" id="4097"/>
    <lineage>
        <taxon>Eukaryota</taxon>
        <taxon>Viridiplantae</taxon>
        <taxon>Streptophyta</taxon>
        <taxon>Embryophyta</taxon>
        <taxon>Tracheophyta</taxon>
        <taxon>Spermatophyta</taxon>
        <taxon>Magnoliopsida</taxon>
        <taxon>eudicotyledons</taxon>
        <taxon>Gunneridae</taxon>
        <taxon>Pentapetalae</taxon>
        <taxon>asterids</taxon>
        <taxon>lamiids</taxon>
        <taxon>Solanales</taxon>
        <taxon>Solanaceae</taxon>
        <taxon>Nicotianoideae</taxon>
        <taxon>Nicotianeae</taxon>
        <taxon>Nicotiana</taxon>
    </lineage>
</organism>
<proteinExistence type="evidence at protein level"/>
<dbReference type="EC" id="4.2.3.140" evidence="3"/>
<dbReference type="EMBL" id="HE588140">
    <property type="protein sequence ID" value="CCD33019.1"/>
    <property type="molecule type" value="mRNA"/>
</dbReference>
<dbReference type="EMBL" id="KF000066">
    <property type="protein sequence ID" value="AGN95433.1"/>
    <property type="molecule type" value="mRNA"/>
</dbReference>
<dbReference type="RefSeq" id="NP_001312911.1">
    <property type="nucleotide sequence ID" value="NM_001325982.1"/>
</dbReference>
<dbReference type="SMR" id="G3CCC1"/>
<dbReference type="STRING" id="4097.G3CCC1"/>
<dbReference type="PaxDb" id="4097-G3CCC1"/>
<dbReference type="GeneID" id="107816701"/>
<dbReference type="KEGG" id="ag:CCD33019"/>
<dbReference type="KEGG" id="nta:107816701"/>
<dbReference type="OrthoDB" id="2343925at2759"/>
<dbReference type="BioCyc" id="MetaCyc:MONOMER18C3-48"/>
<dbReference type="UniPathway" id="UPA00213"/>
<dbReference type="Proteomes" id="UP000084051">
    <property type="component" value="Unplaced"/>
</dbReference>
<dbReference type="GO" id="GO:0009507">
    <property type="term" value="C:chloroplast"/>
    <property type="evidence" value="ECO:0000318"/>
    <property type="project" value="GO_Central"/>
</dbReference>
<dbReference type="GO" id="GO:0016838">
    <property type="term" value="F:carbon-oxygen lyase activity, acting on phosphates"/>
    <property type="evidence" value="ECO:0000314"/>
    <property type="project" value="UniProtKB"/>
</dbReference>
<dbReference type="GO" id="GO:0000287">
    <property type="term" value="F:magnesium ion binding"/>
    <property type="evidence" value="ECO:0000318"/>
    <property type="project" value="GO_Central"/>
</dbReference>
<dbReference type="GO" id="GO:0010333">
    <property type="term" value="F:terpene synthase activity"/>
    <property type="evidence" value="ECO:0000314"/>
    <property type="project" value="UniProtKB"/>
</dbReference>
<dbReference type="GO" id="GO:1902246">
    <property type="term" value="P:cis-abienol biosynthetic process"/>
    <property type="evidence" value="ECO:0000314"/>
    <property type="project" value="UniProtKB"/>
</dbReference>
<dbReference type="GO" id="GO:1902242">
    <property type="term" value="P:copal-8-ol diphosphate(3-) catabolic process"/>
    <property type="evidence" value="ECO:0000314"/>
    <property type="project" value="UniProtKB"/>
</dbReference>
<dbReference type="GO" id="GO:0009686">
    <property type="term" value="P:gibberellin biosynthetic process"/>
    <property type="evidence" value="ECO:0000318"/>
    <property type="project" value="GO_Central"/>
</dbReference>
<dbReference type="FunFam" id="1.10.600.10:FF:000036">
    <property type="entry name" value="cis-abienol synthase, chloroplastic"/>
    <property type="match status" value="1"/>
</dbReference>
<dbReference type="FunFam" id="1.50.10.160:FF:000002">
    <property type="entry name" value="cis-abienol synthase, chloroplastic"/>
    <property type="match status" value="1"/>
</dbReference>
<dbReference type="FunFam" id="1.50.10.130:FF:000002">
    <property type="entry name" value="Ent-copalyl diphosphate synthase, chloroplastic"/>
    <property type="match status" value="1"/>
</dbReference>
<dbReference type="Gene3D" id="1.50.10.160">
    <property type="match status" value="1"/>
</dbReference>
<dbReference type="Gene3D" id="1.10.600.10">
    <property type="entry name" value="Farnesyl Diphosphate Synthase"/>
    <property type="match status" value="1"/>
</dbReference>
<dbReference type="Gene3D" id="1.50.10.130">
    <property type="entry name" value="Terpene synthase, N-terminal domain"/>
    <property type="match status" value="1"/>
</dbReference>
<dbReference type="InterPro" id="IPR008949">
    <property type="entry name" value="Isoprenoid_synthase_dom_sf"/>
</dbReference>
<dbReference type="InterPro" id="IPR001906">
    <property type="entry name" value="Terpene_synth_N"/>
</dbReference>
<dbReference type="InterPro" id="IPR036965">
    <property type="entry name" value="Terpene_synth_N_sf"/>
</dbReference>
<dbReference type="InterPro" id="IPR050148">
    <property type="entry name" value="Terpene_synthase-like"/>
</dbReference>
<dbReference type="InterPro" id="IPR005630">
    <property type="entry name" value="Terpene_synthase_metal-bd"/>
</dbReference>
<dbReference type="InterPro" id="IPR008930">
    <property type="entry name" value="Terpenoid_cyclase/PrenylTrfase"/>
</dbReference>
<dbReference type="PANTHER" id="PTHR31739:SF33">
    <property type="entry name" value="CIS-ABIENOL SYNTHASE, CHLOROPLASTIC"/>
    <property type="match status" value="1"/>
</dbReference>
<dbReference type="PANTHER" id="PTHR31739">
    <property type="entry name" value="ENT-COPALYL DIPHOSPHATE SYNTHASE, CHLOROPLASTIC"/>
    <property type="match status" value="1"/>
</dbReference>
<dbReference type="Pfam" id="PF01397">
    <property type="entry name" value="Terpene_synth"/>
    <property type="match status" value="1"/>
</dbReference>
<dbReference type="Pfam" id="PF03936">
    <property type="entry name" value="Terpene_synth_C"/>
    <property type="match status" value="1"/>
</dbReference>
<dbReference type="SFLD" id="SFLDG01014">
    <property type="entry name" value="Terpene_Cyclase_Like_1_N-term"/>
    <property type="match status" value="1"/>
</dbReference>
<dbReference type="SUPFAM" id="SSF48239">
    <property type="entry name" value="Terpenoid cyclases/Protein prenyltransferases"/>
    <property type="match status" value="2"/>
</dbReference>
<dbReference type="SUPFAM" id="SSF48576">
    <property type="entry name" value="Terpenoid synthases"/>
    <property type="match status" value="1"/>
</dbReference>
<feature type="transit peptide" description="Chloroplast" evidence="2">
    <location>
        <begin position="1"/>
        <end position="37"/>
    </location>
</feature>
<feature type="chain" id="PRO_5000793117" description="Cis-abienol synthase, chloroplastic">
    <location>
        <begin position="38"/>
        <end position="792"/>
    </location>
</feature>
<feature type="short sequence motif" description="DDXXD motif">
    <location>
        <begin position="539"/>
        <end position="543"/>
    </location>
</feature>
<feature type="binding site" evidence="1">
    <location>
        <position position="539"/>
    </location>
    <ligand>
        <name>Mg(2+)</name>
        <dbReference type="ChEBI" id="CHEBI:18420"/>
        <label>1</label>
    </ligand>
</feature>
<feature type="binding site" evidence="1">
    <location>
        <position position="539"/>
    </location>
    <ligand>
        <name>Mg(2+)</name>
        <dbReference type="ChEBI" id="CHEBI:18420"/>
        <label>2</label>
    </ligand>
</feature>
<feature type="binding site" evidence="1">
    <location>
        <position position="543"/>
    </location>
    <ligand>
        <name>Mg(2+)</name>
        <dbReference type="ChEBI" id="CHEBI:18420"/>
        <label>1</label>
    </ligand>
</feature>
<feature type="binding site" evidence="1">
    <location>
        <position position="543"/>
    </location>
    <ligand>
        <name>Mg(2+)</name>
        <dbReference type="ChEBI" id="CHEBI:18420"/>
        <label>2</label>
    </ligand>
</feature>
<feature type="binding site" evidence="1">
    <location>
        <position position="684"/>
    </location>
    <ligand>
        <name>Mg(2+)</name>
        <dbReference type="ChEBI" id="CHEBI:18420"/>
        <label>3</label>
    </ligand>
</feature>
<feature type="binding site" evidence="1">
    <location>
        <position position="692"/>
    </location>
    <ligand>
        <name>Mg(2+)</name>
        <dbReference type="ChEBI" id="CHEBI:18420"/>
        <label>3</label>
    </ligand>
</feature>
<name>CABS_TOBAC</name>
<evidence type="ECO:0000250" key="1"/>
<evidence type="ECO:0000255" key="2"/>
<evidence type="ECO:0000269" key="3">
    <source>
    </source>
</evidence>
<evidence type="ECO:0000303" key="4">
    <source>
    </source>
</evidence>
<evidence type="ECO:0000305" key="5"/>
<evidence type="ECO:0000305" key="6">
    <source>
    </source>
</evidence>
<accession>G3CCC1</accession>
<reference key="1">
    <citation type="journal article" date="2012" name="Plant J.">
        <title>Characterization of two genes for the biosynthesis of the labdane diterpene Z-abienol in tobacco (Nicotiana tabacum) glandular trichomes.</title>
        <authorList>
            <person name="Sallaud C."/>
            <person name="Giacalone C."/>
            <person name="Toepfer R."/>
            <person name="Goepfert S."/>
            <person name="Bakaher N."/>
            <person name="Roesti S."/>
            <person name="Tissier A."/>
        </authorList>
    </citation>
    <scope>NUCLEOTIDE SEQUENCE [MRNA]</scope>
    <scope>FUNCTION</scope>
    <scope>CATALYTIC ACTIVITY</scope>
    <scope>TISSUE SPECIFICITY</scope>
    <scope>PATHWAY</scope>
</reference>
<reference key="2">
    <citation type="journal article" date="2013" name="Plant Cell">
        <title>Evolution of a complex locus for terpene biosynthesis in Solanum.</title>
        <authorList>
            <person name="Matsuba Y."/>
            <person name="Nguyen T.T."/>
            <person name="Wiegert K."/>
            <person name="Falara V."/>
            <person name="Gonzales-Vigil E."/>
            <person name="Leong B."/>
            <person name="Schafer P."/>
            <person name="Kudrna D."/>
            <person name="Wing R.A."/>
            <person name="Bolger A.M."/>
            <person name="Usadel B."/>
            <person name="Tissier A."/>
            <person name="Fernie A.R."/>
            <person name="Barry C.S."/>
            <person name="Pichersky E."/>
        </authorList>
    </citation>
    <scope>NUCLEOTIDE SEQUENCE [GENOMIC DNA]</scope>
    <source>
        <strain>cv. Ambalema</strain>
    </source>
</reference>
<reference key="3">
    <citation type="journal article" date="2019" name="Nat. Prod. Rep.">
        <title>Non-volatile natural products in plant glandular trichomes: chemistry, biological activities and biosynthesis.</title>
        <authorList>
            <person name="Liu Y."/>
            <person name="Jing S.-X."/>
            <person name="Luo S.-H."/>
            <person name="Li S.-H."/>
        </authorList>
    </citation>
    <scope>PATHWAY</scope>
    <scope>REVIEW</scope>
</reference>
<gene>
    <name evidence="4" type="primary">ABS</name>
</gene>
<comment type="function">
    <text evidence="3">Involved in the biosynthesis of cis-abienol, a labdane diterpene that can be used as synthesis precursor of ambergris substitution fragance products.</text>
</comment>
<comment type="catalytic activity">
    <reaction evidence="3">
        <text>8-hydroxycopalyl diphosphate = cis-abienol + diphosphate</text>
        <dbReference type="Rhea" id="RHEA:34463"/>
        <dbReference type="ChEBI" id="CHEBI:33019"/>
        <dbReference type="ChEBI" id="CHEBI:64283"/>
        <dbReference type="ChEBI" id="CHEBI:68624"/>
        <dbReference type="EC" id="4.2.3.140"/>
    </reaction>
</comment>
<comment type="cofactor">
    <cofactor evidence="5">
        <name>Mg(2+)</name>
        <dbReference type="ChEBI" id="CHEBI:18420"/>
    </cofactor>
</comment>
<comment type="pathway">
    <text evidence="3">Secondary metabolite biosynthesis; terpenoid biosynthesis.</text>
</comment>
<comment type="subcellular location">
    <subcellularLocation>
        <location evidence="1">Plastid</location>
        <location evidence="1">Chloroplast</location>
    </subcellularLocation>
</comment>
<comment type="tissue specificity">
    <text evidence="3">Expressed specifically in trichomes.</text>
</comment>
<comment type="domain">
    <text evidence="1">The Asp-Asp-Xaa-Xaa-Asp/Glu (DDXXD/E) motif is important for the catalytic activity, presumably through binding to Mg(2+).</text>
</comment>
<comment type="miscellaneous">
    <text evidence="6">The expression of both CPS2 and ABS is necessary and sufficient to catalyze the biosynthesis of cis-abienol from geranylgeranyl diphosphate in a heterologous system.</text>
</comment>
<comment type="similarity">
    <text evidence="5">Belongs to the terpene synthase family.</text>
</comment>
<sequence>MVLGLRSKIIPLPDHKLGNIKLGSVTNAICHRPCRVRCSHSTASSMEEAKERIRETFGKIELSPSSYDTAWVAMVPSRYSMNQPCFPQCLDWILENQREDGSWGLNPSHPLLVKDSLSSTLASLLALRKWRIGDNQVQRGLGFIETHGWAVDNKDQISPLGFEIIFPCMINYAEKLNLDLPLDPNLVNMMLCERELTIERALKNEFEGNMANVEYFAEGLGELCHWKEMMLRQRHNGSLFDSPATTAAALIYHQYDEKCFGYLNSILKLHDNWVPTICPTKIHSNLFLVDALQNLGVDRYFKTEVKRVLDEIYRLWLEKNEEIFSDVAHCAMAFRLLRMNNYEVSSEELEGFVDQEHFFTTSSGKLMNHVAILELHRASQVAIHERKDHILDKISTWTRNFMEQKLLDKHIPDRSKKEMEFAMRKFYGTFDRVETRRYIESYKMDSFKILKAAYRSSGINNIDLLKFSEHDFNLCQTRHKEELQQMKRWFTDCKLEQVGLSQQYLYTSYFIIAAILFEPEYADARLAYAKYAIIITAVDDFFDCFICKEELQNIIELVERWEGYSTVGFRSERVRIFFLALYKMVEEIAAKAETKQGRCVKDHLINLWIDMLKCMLVELDLWKIKSTTPSIEEYLSVACVTIGVPCFVLTSLYLLGPKLSKDVIESSEVSALCNCTAAVARLINDIHSYKREQAESSTNMVSILITQSQGTISEEEAIRQIKEMMESKRRELLGMVLQNKESQLPQVCKDLFWTTINAAYSIHTHGDGYRFPEEFKNHINDVIYKPLNQYSP</sequence>